<organism>
    <name type="scientific">Acorus calamus var. americanus</name>
    <name type="common">American sweet flag</name>
    <name type="synonym">Acorus americanus</name>
    <dbReference type="NCBI Taxonomy" id="263995"/>
    <lineage>
        <taxon>Eukaryota</taxon>
        <taxon>Viridiplantae</taxon>
        <taxon>Streptophyta</taxon>
        <taxon>Embryophyta</taxon>
        <taxon>Tracheophyta</taxon>
        <taxon>Spermatophyta</taxon>
        <taxon>Magnoliopsida</taxon>
        <taxon>Liliopsida</taxon>
        <taxon>Acoraceae</taxon>
        <taxon>Acorus</taxon>
    </lineage>
</organism>
<feature type="chain" id="PRO_0000360298" description="NAD(P)H-quinone oxidoreductase subunit 4L, chloroplastic">
    <location>
        <begin position="1"/>
        <end position="101"/>
    </location>
</feature>
<feature type="transmembrane region" description="Helical" evidence="1">
    <location>
        <begin position="2"/>
        <end position="22"/>
    </location>
</feature>
<feature type="transmembrane region" description="Helical" evidence="1">
    <location>
        <begin position="32"/>
        <end position="52"/>
    </location>
</feature>
<feature type="transmembrane region" description="Helical" evidence="1">
    <location>
        <begin position="61"/>
        <end position="81"/>
    </location>
</feature>
<keyword id="KW-0150">Chloroplast</keyword>
<keyword id="KW-0472">Membrane</keyword>
<keyword id="KW-0520">NAD</keyword>
<keyword id="KW-0521">NADP</keyword>
<keyword id="KW-0934">Plastid</keyword>
<keyword id="KW-0618">Plastoquinone</keyword>
<keyword id="KW-0874">Quinone</keyword>
<keyword id="KW-0793">Thylakoid</keyword>
<keyword id="KW-1278">Translocase</keyword>
<keyword id="KW-0812">Transmembrane</keyword>
<keyword id="KW-1133">Transmembrane helix</keyword>
<keyword id="KW-0813">Transport</keyword>
<protein>
    <recommendedName>
        <fullName evidence="1">NAD(P)H-quinone oxidoreductase subunit 4L, chloroplastic</fullName>
        <ecNumber evidence="1">7.1.1.-</ecNumber>
    </recommendedName>
    <alternativeName>
        <fullName evidence="1">NAD(P)H dehydrogenase subunit 4L</fullName>
    </alternativeName>
    <alternativeName>
        <fullName evidence="1">NADH-plastoquinone oxidoreductase subunit 4L</fullName>
    </alternativeName>
</protein>
<sequence length="101" mass="11277">MMLEYVLFLSAYLFSIGIYGLITSRNMVRALMCLELILNAVNINLVTFSDLFDSRQLKGDIFSIFVIAIAAAEAAIGPAIVSSIYRNRKSIRINQSNLLNK</sequence>
<proteinExistence type="inferred from homology"/>
<evidence type="ECO:0000255" key="1">
    <source>
        <dbReference type="HAMAP-Rule" id="MF_01456"/>
    </source>
</evidence>
<dbReference type="EC" id="7.1.1.-" evidence="1"/>
<dbReference type="EMBL" id="EU016708">
    <property type="protein sequence ID" value="ABU85150.1"/>
    <property type="molecule type" value="Genomic_DNA"/>
</dbReference>
<dbReference type="EMBL" id="EU273602">
    <property type="protein sequence ID" value="ABX38795.1"/>
    <property type="molecule type" value="Genomic_DNA"/>
</dbReference>
<dbReference type="RefSeq" id="YP_001586233.1">
    <property type="nucleotide sequence ID" value="NC_010093.1"/>
</dbReference>
<dbReference type="SMR" id="A9LYF2"/>
<dbReference type="GeneID" id="5777745"/>
<dbReference type="GO" id="GO:0009535">
    <property type="term" value="C:chloroplast thylakoid membrane"/>
    <property type="evidence" value="ECO:0007669"/>
    <property type="project" value="UniProtKB-SubCell"/>
</dbReference>
<dbReference type="GO" id="GO:0030964">
    <property type="term" value="C:NADH dehydrogenase complex"/>
    <property type="evidence" value="ECO:0007669"/>
    <property type="project" value="TreeGrafter"/>
</dbReference>
<dbReference type="GO" id="GO:0016655">
    <property type="term" value="F:oxidoreductase activity, acting on NAD(P)H, quinone or similar compound as acceptor"/>
    <property type="evidence" value="ECO:0007669"/>
    <property type="project" value="UniProtKB-UniRule"/>
</dbReference>
<dbReference type="GO" id="GO:0048038">
    <property type="term" value="F:quinone binding"/>
    <property type="evidence" value="ECO:0007669"/>
    <property type="project" value="UniProtKB-KW"/>
</dbReference>
<dbReference type="GO" id="GO:0042773">
    <property type="term" value="P:ATP synthesis coupled electron transport"/>
    <property type="evidence" value="ECO:0007669"/>
    <property type="project" value="InterPro"/>
</dbReference>
<dbReference type="GO" id="GO:0019684">
    <property type="term" value="P:photosynthesis, light reaction"/>
    <property type="evidence" value="ECO:0007669"/>
    <property type="project" value="UniProtKB-UniRule"/>
</dbReference>
<dbReference type="FunFam" id="1.10.287.3510:FF:000001">
    <property type="entry name" value="NADH-quinone oxidoreductase subunit K"/>
    <property type="match status" value="1"/>
</dbReference>
<dbReference type="Gene3D" id="1.10.287.3510">
    <property type="match status" value="1"/>
</dbReference>
<dbReference type="HAMAP" id="MF_01456">
    <property type="entry name" value="NDH1_NuoK"/>
    <property type="match status" value="1"/>
</dbReference>
<dbReference type="InterPro" id="IPR001133">
    <property type="entry name" value="NADH_UbQ_OxRdtase_chain4L/K"/>
</dbReference>
<dbReference type="InterPro" id="IPR039428">
    <property type="entry name" value="NUOK/Mnh_C1-like"/>
</dbReference>
<dbReference type="NCBIfam" id="NF004320">
    <property type="entry name" value="PRK05715.1-2"/>
    <property type="match status" value="1"/>
</dbReference>
<dbReference type="NCBIfam" id="NF004322">
    <property type="entry name" value="PRK05715.1-4"/>
    <property type="match status" value="1"/>
</dbReference>
<dbReference type="PANTHER" id="PTHR11434:SF16">
    <property type="entry name" value="NADH-UBIQUINONE OXIDOREDUCTASE CHAIN 4L"/>
    <property type="match status" value="1"/>
</dbReference>
<dbReference type="PANTHER" id="PTHR11434">
    <property type="entry name" value="NADH-UBIQUINONE OXIDOREDUCTASE SUBUNIT ND4L"/>
    <property type="match status" value="1"/>
</dbReference>
<dbReference type="Pfam" id="PF00420">
    <property type="entry name" value="Oxidored_q2"/>
    <property type="match status" value="1"/>
</dbReference>
<reference key="1">
    <citation type="journal article" date="2007" name="Proc. Natl. Acad. Sci. U.S.A.">
        <title>Analysis of 81 genes from 64 plastid genomes resolves relationships in angiosperms and identifies genome-scale evolutionary patterns.</title>
        <authorList>
            <person name="Jansen R.K."/>
            <person name="Cai Z."/>
            <person name="Raubeson L.A."/>
            <person name="Daniell H."/>
            <person name="dePamphilis C.W."/>
            <person name="Leebens-Mack J."/>
            <person name="Muller K.F."/>
            <person name="Guisinger-Bellian M."/>
            <person name="Haberle R.C."/>
            <person name="Hansen A.K."/>
            <person name="Chumley T.W."/>
            <person name="Lee S.B."/>
            <person name="Peery R."/>
            <person name="McNeal J.R."/>
            <person name="Kuehl J.V."/>
            <person name="Boore J.L."/>
        </authorList>
    </citation>
    <scope>NUCLEOTIDE SEQUENCE [GENOMIC DNA]</scope>
</reference>
<reference key="2">
    <citation type="submission" date="2007-11" db="EMBL/GenBank/DDBJ databases">
        <title>The complete chloroplast genome of Acorus americanus.</title>
        <authorList>
            <person name="Peery R.M."/>
            <person name="Chumley T.W."/>
            <person name="Kuehl J.V."/>
            <person name="Boore J.L."/>
            <person name="Raubeson L.A."/>
        </authorList>
    </citation>
    <scope>NUCLEOTIDE SEQUENCE [LARGE SCALE GENOMIC DNA]</scope>
</reference>
<comment type="function">
    <text evidence="1">NDH shuttles electrons from NAD(P)H:plastoquinone, via FMN and iron-sulfur (Fe-S) centers, to quinones in the photosynthetic chain and possibly in a chloroplast respiratory chain. The immediate electron acceptor for the enzyme in this species is believed to be plastoquinone. Couples the redox reaction to proton translocation, and thus conserves the redox energy in a proton gradient.</text>
</comment>
<comment type="catalytic activity">
    <reaction evidence="1">
        <text>a plastoquinone + NADH + (n+1) H(+)(in) = a plastoquinol + NAD(+) + n H(+)(out)</text>
        <dbReference type="Rhea" id="RHEA:42608"/>
        <dbReference type="Rhea" id="RHEA-COMP:9561"/>
        <dbReference type="Rhea" id="RHEA-COMP:9562"/>
        <dbReference type="ChEBI" id="CHEBI:15378"/>
        <dbReference type="ChEBI" id="CHEBI:17757"/>
        <dbReference type="ChEBI" id="CHEBI:57540"/>
        <dbReference type="ChEBI" id="CHEBI:57945"/>
        <dbReference type="ChEBI" id="CHEBI:62192"/>
    </reaction>
</comment>
<comment type="catalytic activity">
    <reaction evidence="1">
        <text>a plastoquinone + NADPH + (n+1) H(+)(in) = a plastoquinol + NADP(+) + n H(+)(out)</text>
        <dbReference type="Rhea" id="RHEA:42612"/>
        <dbReference type="Rhea" id="RHEA-COMP:9561"/>
        <dbReference type="Rhea" id="RHEA-COMP:9562"/>
        <dbReference type="ChEBI" id="CHEBI:15378"/>
        <dbReference type="ChEBI" id="CHEBI:17757"/>
        <dbReference type="ChEBI" id="CHEBI:57783"/>
        <dbReference type="ChEBI" id="CHEBI:58349"/>
        <dbReference type="ChEBI" id="CHEBI:62192"/>
    </reaction>
</comment>
<comment type="subunit">
    <text evidence="1">NDH is composed of at least 16 different subunits, 5 of which are encoded in the nucleus.</text>
</comment>
<comment type="subcellular location">
    <subcellularLocation>
        <location evidence="1">Plastid</location>
        <location evidence="1">Chloroplast thylakoid membrane</location>
        <topology evidence="1">Multi-pass membrane protein</topology>
    </subcellularLocation>
</comment>
<comment type="similarity">
    <text evidence="1">Belongs to the complex I subunit 4L family.</text>
</comment>
<name>NU4LC_ACOCI</name>
<accession>A9LYF2</accession>
<accession>A9QAQ7</accession>
<gene>
    <name evidence="1" type="primary">ndhE</name>
</gene>
<geneLocation type="chloroplast"/>